<proteinExistence type="inferred from homology"/>
<feature type="chain" id="PRO_0000322465" description="V-type ATP synthase alpha chain 2">
    <location>
        <begin position="1"/>
        <end position="592"/>
    </location>
</feature>
<feature type="binding site" evidence="1">
    <location>
        <begin position="237"/>
        <end position="244"/>
    </location>
    <ligand>
        <name>ATP</name>
        <dbReference type="ChEBI" id="CHEBI:30616"/>
    </ligand>
</feature>
<sequence>MVLLDSLVGTIVGINGPVIKAEGMSKFKMREMVMVGKKKLIGEIIILENDLATIQVYEETSGLKIGENISSTGMPLSLKLGPGIIGNMFDGIQRPLKKINEISYGFIDEGIGLISIDEEKEWDVNIVVKVGDKLKPGDVYAEVQETNIIKHRIMVPQDVNGEVTKVKESGKYNIEEKIVTVKDGGNIYELNLYQRWPVRTPRPIKNRLSLGKPLITGQRILDMFFPIAKGGTVAIPGGFGTGKTMTQHQLAKWSDADIIVYIGCGERGNEMTEVLEDFPKLIDPKTNTSLMNRTVLIANTSNMPVAAREASIYTGITIAEYYRDMGYDVAIMADSTSRWAEALREISGRLEEMPAEEGYPAYLPSRIAEFYERAGYVENLNDTEGSVTVIGAVSPAGADFSEPVTQNTKRFVGAFLGLDRKLAYARHYPAINWLTSYSQYNVMLTDWYLENISEDIIELRNKMLKILFEENKLQEIVKLVGEDVLPDDQRLILEVARILKVGFLQQNAYHDEDTYVPKEKQYKMLKAIELFYDNAYKCVKMGIPISKIRNEEIFGDLIKMKYNIPNEDISGIKVIEEKISSYYEELIEQYRK</sequence>
<comment type="function">
    <text evidence="1">Produces ATP from ADP in the presence of a proton gradient across the membrane. The V-type alpha chain is a catalytic subunit.</text>
</comment>
<comment type="catalytic activity">
    <reaction evidence="1">
        <text>ATP + H2O + 4 H(+)(in) = ADP + phosphate + 5 H(+)(out)</text>
        <dbReference type="Rhea" id="RHEA:57720"/>
        <dbReference type="ChEBI" id="CHEBI:15377"/>
        <dbReference type="ChEBI" id="CHEBI:15378"/>
        <dbReference type="ChEBI" id="CHEBI:30616"/>
        <dbReference type="ChEBI" id="CHEBI:43474"/>
        <dbReference type="ChEBI" id="CHEBI:456216"/>
        <dbReference type="EC" id="7.1.2.2"/>
    </reaction>
</comment>
<comment type="similarity">
    <text evidence="1">Belongs to the ATPase alpha/beta chains family.</text>
</comment>
<protein>
    <recommendedName>
        <fullName evidence="1">V-type ATP synthase alpha chain 2</fullName>
        <ecNumber evidence="1">7.1.2.2</ecNumber>
    </recommendedName>
    <alternativeName>
        <fullName evidence="1">V-ATPase subunit A 2</fullName>
    </alternativeName>
</protein>
<evidence type="ECO:0000255" key="1">
    <source>
        <dbReference type="HAMAP-Rule" id="MF_00309"/>
    </source>
</evidence>
<accession>Q891P1</accession>
<organism>
    <name type="scientific">Clostridium tetani (strain Massachusetts / E88)</name>
    <dbReference type="NCBI Taxonomy" id="212717"/>
    <lineage>
        <taxon>Bacteria</taxon>
        <taxon>Bacillati</taxon>
        <taxon>Bacillota</taxon>
        <taxon>Clostridia</taxon>
        <taxon>Eubacteriales</taxon>
        <taxon>Clostridiaceae</taxon>
        <taxon>Clostridium</taxon>
    </lineage>
</organism>
<reference key="1">
    <citation type="journal article" date="2003" name="Proc. Natl. Acad. Sci. U.S.A.">
        <title>The genome sequence of Clostridium tetani, the causative agent of tetanus disease.</title>
        <authorList>
            <person name="Brueggemann H."/>
            <person name="Baeumer S."/>
            <person name="Fricke W.F."/>
            <person name="Wiezer A."/>
            <person name="Liesegang H."/>
            <person name="Decker I."/>
            <person name="Herzberg C."/>
            <person name="Martinez-Arias R."/>
            <person name="Merkl R."/>
            <person name="Henne A."/>
            <person name="Gottschalk G."/>
        </authorList>
    </citation>
    <scope>NUCLEOTIDE SEQUENCE [LARGE SCALE GENOMIC DNA]</scope>
    <source>
        <strain>Massachusetts / E88</strain>
    </source>
</reference>
<dbReference type="EC" id="7.1.2.2" evidence="1"/>
<dbReference type="EMBL" id="AE015927">
    <property type="protein sequence ID" value="AAO36804.1"/>
    <property type="molecule type" value="Genomic_DNA"/>
</dbReference>
<dbReference type="RefSeq" id="WP_011100465.1">
    <property type="nucleotide sequence ID" value="NC_004557.1"/>
</dbReference>
<dbReference type="SMR" id="Q891P1"/>
<dbReference type="STRING" id="212717.CTC_02328"/>
<dbReference type="GeneID" id="24253649"/>
<dbReference type="KEGG" id="ctc:CTC_02328"/>
<dbReference type="HOGENOM" id="CLU_008162_3_1_9"/>
<dbReference type="OrthoDB" id="9803053at2"/>
<dbReference type="Proteomes" id="UP000001412">
    <property type="component" value="Chromosome"/>
</dbReference>
<dbReference type="GO" id="GO:0045259">
    <property type="term" value="C:proton-transporting ATP synthase complex"/>
    <property type="evidence" value="ECO:0007669"/>
    <property type="project" value="UniProtKB-ARBA"/>
</dbReference>
<dbReference type="GO" id="GO:0005524">
    <property type="term" value="F:ATP binding"/>
    <property type="evidence" value="ECO:0007669"/>
    <property type="project" value="UniProtKB-UniRule"/>
</dbReference>
<dbReference type="GO" id="GO:0046933">
    <property type="term" value="F:proton-transporting ATP synthase activity, rotational mechanism"/>
    <property type="evidence" value="ECO:0007669"/>
    <property type="project" value="UniProtKB-UniRule"/>
</dbReference>
<dbReference type="GO" id="GO:0046961">
    <property type="term" value="F:proton-transporting ATPase activity, rotational mechanism"/>
    <property type="evidence" value="ECO:0007669"/>
    <property type="project" value="InterPro"/>
</dbReference>
<dbReference type="GO" id="GO:0042777">
    <property type="term" value="P:proton motive force-driven plasma membrane ATP synthesis"/>
    <property type="evidence" value="ECO:0007669"/>
    <property type="project" value="UniProtKB-UniRule"/>
</dbReference>
<dbReference type="CDD" id="cd18111">
    <property type="entry name" value="ATP-synt_V_A-type_alpha_C"/>
    <property type="match status" value="1"/>
</dbReference>
<dbReference type="CDD" id="cd01134">
    <property type="entry name" value="V_A-ATPase_A"/>
    <property type="match status" value="1"/>
</dbReference>
<dbReference type="Gene3D" id="2.40.30.20">
    <property type="match status" value="1"/>
</dbReference>
<dbReference type="Gene3D" id="2.40.50.100">
    <property type="match status" value="1"/>
</dbReference>
<dbReference type="Gene3D" id="1.10.1140.10">
    <property type="entry name" value="Bovine Mitochondrial F1-atpase, Atp Synthase Beta Chain, Chain D, domain 3"/>
    <property type="match status" value="1"/>
</dbReference>
<dbReference type="Gene3D" id="3.40.50.300">
    <property type="entry name" value="P-loop containing nucleotide triphosphate hydrolases"/>
    <property type="match status" value="1"/>
</dbReference>
<dbReference type="HAMAP" id="MF_00309">
    <property type="entry name" value="ATP_synth_A_arch"/>
    <property type="match status" value="1"/>
</dbReference>
<dbReference type="InterPro" id="IPR055190">
    <property type="entry name" value="ATP-synt_VA_C"/>
</dbReference>
<dbReference type="InterPro" id="IPR031686">
    <property type="entry name" value="ATP-synth_a_Xtn"/>
</dbReference>
<dbReference type="InterPro" id="IPR023366">
    <property type="entry name" value="ATP_synth_asu-like_sf"/>
</dbReference>
<dbReference type="InterPro" id="IPR020003">
    <property type="entry name" value="ATPase_a/bsu_AS"/>
</dbReference>
<dbReference type="InterPro" id="IPR004100">
    <property type="entry name" value="ATPase_F1/V1/A1_a/bsu_N"/>
</dbReference>
<dbReference type="InterPro" id="IPR036121">
    <property type="entry name" value="ATPase_F1/V1/A1_a/bsu_N_sf"/>
</dbReference>
<dbReference type="InterPro" id="IPR000194">
    <property type="entry name" value="ATPase_F1/V1/A1_a/bsu_nucl-bd"/>
</dbReference>
<dbReference type="InterPro" id="IPR024034">
    <property type="entry name" value="ATPase_F1/V1_b/a_C"/>
</dbReference>
<dbReference type="InterPro" id="IPR027417">
    <property type="entry name" value="P-loop_NTPase"/>
</dbReference>
<dbReference type="InterPro" id="IPR022878">
    <property type="entry name" value="V-ATPase_asu"/>
</dbReference>
<dbReference type="NCBIfam" id="NF003220">
    <property type="entry name" value="PRK04192.1"/>
    <property type="match status" value="1"/>
</dbReference>
<dbReference type="PANTHER" id="PTHR43607:SF1">
    <property type="entry name" value="H(+)-TRANSPORTING TWO-SECTOR ATPASE"/>
    <property type="match status" value="1"/>
</dbReference>
<dbReference type="PANTHER" id="PTHR43607">
    <property type="entry name" value="V-TYPE PROTON ATPASE CATALYTIC SUBUNIT A"/>
    <property type="match status" value="1"/>
</dbReference>
<dbReference type="Pfam" id="PF00006">
    <property type="entry name" value="ATP-synt_ab"/>
    <property type="match status" value="1"/>
</dbReference>
<dbReference type="Pfam" id="PF02874">
    <property type="entry name" value="ATP-synt_ab_N"/>
    <property type="match status" value="1"/>
</dbReference>
<dbReference type="Pfam" id="PF16886">
    <property type="entry name" value="ATP-synt_ab_Xtn"/>
    <property type="match status" value="1"/>
</dbReference>
<dbReference type="Pfam" id="PF22919">
    <property type="entry name" value="ATP-synt_VA_C"/>
    <property type="match status" value="1"/>
</dbReference>
<dbReference type="SUPFAM" id="SSF47917">
    <property type="entry name" value="C-terminal domain of alpha and beta subunits of F1 ATP synthase"/>
    <property type="match status" value="1"/>
</dbReference>
<dbReference type="SUPFAM" id="SSF50615">
    <property type="entry name" value="N-terminal domain of alpha and beta subunits of F1 ATP synthase"/>
    <property type="match status" value="1"/>
</dbReference>
<dbReference type="SUPFAM" id="SSF52540">
    <property type="entry name" value="P-loop containing nucleoside triphosphate hydrolases"/>
    <property type="match status" value="1"/>
</dbReference>
<dbReference type="PROSITE" id="PS00152">
    <property type="entry name" value="ATPASE_ALPHA_BETA"/>
    <property type="match status" value="1"/>
</dbReference>
<keyword id="KW-0066">ATP synthesis</keyword>
<keyword id="KW-0067">ATP-binding</keyword>
<keyword id="KW-0375">Hydrogen ion transport</keyword>
<keyword id="KW-0406">Ion transport</keyword>
<keyword id="KW-0547">Nucleotide-binding</keyword>
<keyword id="KW-1185">Reference proteome</keyword>
<keyword id="KW-1278">Translocase</keyword>
<keyword id="KW-0813">Transport</keyword>
<gene>
    <name evidence="1" type="primary">atpA2</name>
    <name type="ordered locus">CTC_02328</name>
</gene>
<name>VATA2_CLOTE</name>